<sequence>MNALGRHILAEIYGCDSNILDNLELIEDIMVQSAIVTGAEIREVAFHKFNPQGVSGVVVISESHITIHTWPELGYAAVDVFTCGDDVNPWDACNYIAKMLRAQNMTATEVKRGVFEKPVKVVNY</sequence>
<organism>
    <name type="scientific">Thermoanaerobacter sp. (strain X514)</name>
    <dbReference type="NCBI Taxonomy" id="399726"/>
    <lineage>
        <taxon>Bacteria</taxon>
        <taxon>Bacillati</taxon>
        <taxon>Bacillota</taxon>
        <taxon>Clostridia</taxon>
        <taxon>Thermoanaerobacterales</taxon>
        <taxon>Thermoanaerobacteraceae</taxon>
        <taxon>Thermoanaerobacter</taxon>
    </lineage>
</organism>
<name>SPEH_THEPX</name>
<reference key="1">
    <citation type="submission" date="2008-01" db="EMBL/GenBank/DDBJ databases">
        <title>Complete sequence of Thermoanaerobacter sp. X514.</title>
        <authorList>
            <consortium name="US DOE Joint Genome Institute"/>
            <person name="Copeland A."/>
            <person name="Lucas S."/>
            <person name="Lapidus A."/>
            <person name="Barry K."/>
            <person name="Glavina del Rio T."/>
            <person name="Dalin E."/>
            <person name="Tice H."/>
            <person name="Pitluck S."/>
            <person name="Bruce D."/>
            <person name="Goodwin L."/>
            <person name="Saunders E."/>
            <person name="Brettin T."/>
            <person name="Detter J.C."/>
            <person name="Han C."/>
            <person name="Schmutz J."/>
            <person name="Larimer F."/>
            <person name="Land M."/>
            <person name="Hauser L."/>
            <person name="Kyrpides N."/>
            <person name="Kim E."/>
            <person name="Hemme C."/>
            <person name="Fields M.W."/>
            <person name="He Z."/>
            <person name="Zhou J."/>
            <person name="Richardson P."/>
        </authorList>
    </citation>
    <scope>NUCLEOTIDE SEQUENCE [LARGE SCALE GENOMIC DNA]</scope>
    <source>
        <strain>X514</strain>
    </source>
</reference>
<comment type="function">
    <text evidence="1">Catalyzes the decarboxylation of S-adenosylmethionine to S-adenosylmethioninamine (dcAdoMet), the propylamine donor required for the synthesis of the polyamines spermine and spermidine from the diamine putrescine.</text>
</comment>
<comment type="catalytic activity">
    <reaction evidence="1">
        <text>S-adenosyl-L-methionine + H(+) = S-adenosyl 3-(methylsulfanyl)propylamine + CO2</text>
        <dbReference type="Rhea" id="RHEA:15981"/>
        <dbReference type="ChEBI" id="CHEBI:15378"/>
        <dbReference type="ChEBI" id="CHEBI:16526"/>
        <dbReference type="ChEBI" id="CHEBI:57443"/>
        <dbReference type="ChEBI" id="CHEBI:59789"/>
        <dbReference type="EC" id="4.1.1.50"/>
    </reaction>
</comment>
<comment type="cofactor">
    <cofactor evidence="1">
        <name>pyruvate</name>
        <dbReference type="ChEBI" id="CHEBI:15361"/>
    </cofactor>
    <text evidence="1">Binds 1 pyruvoyl group covalently per subunit.</text>
</comment>
<comment type="pathway">
    <text evidence="1">Amine and polyamine biosynthesis; S-adenosylmethioninamine biosynthesis; S-adenosylmethioninamine from S-adenosyl-L-methionine: step 1/1.</text>
</comment>
<comment type="subunit">
    <text evidence="1">Heterotetramer of two alpha and two beta chains arranged as a dimer of alpha/beta heterodimers.</text>
</comment>
<comment type="PTM">
    <text evidence="1">Is synthesized initially as an inactive proenzyme. Formation of the active enzyme involves a self-maturation process in which the active site pyruvoyl group is generated from an internal serine residue via an autocatalytic post-translational modification. Two non-identical subunits are generated from the proenzyme in this reaction, and the pyruvate is formed at the N-terminus of the alpha chain, which is derived from the carboxyl end of the proenzyme. The post-translation cleavage follows an unusual pathway, termed non-hydrolytic serinolysis, in which the side chain hydroxyl group of the serine supplies its oxygen atom to form the C-terminus of the beta chain, while the remainder of the serine residue undergoes an oxidative deamination to produce ammonia and the pyruvoyl group blocking the N-terminus of the alpha chain.</text>
</comment>
<comment type="similarity">
    <text evidence="1">Belongs to the prokaryotic AdoMetDC family. Type 1 subfamily.</text>
</comment>
<keyword id="KW-0068">Autocatalytic cleavage</keyword>
<keyword id="KW-0210">Decarboxylase</keyword>
<keyword id="KW-0456">Lyase</keyword>
<keyword id="KW-0620">Polyamine biosynthesis</keyword>
<keyword id="KW-0670">Pyruvate</keyword>
<keyword id="KW-0949">S-adenosyl-L-methionine</keyword>
<keyword id="KW-0704">Schiff base</keyword>
<keyword id="KW-0745">Spermidine biosynthesis</keyword>
<keyword id="KW-0865">Zymogen</keyword>
<feature type="chain" id="PRO_1000125471" description="S-adenosylmethionine decarboxylase beta chain" evidence="1">
    <location>
        <begin position="1"/>
        <end position="62"/>
    </location>
</feature>
<feature type="chain" id="PRO_1000125472" description="S-adenosylmethionine decarboxylase alpha chain" evidence="1">
    <location>
        <begin position="63"/>
        <end position="124"/>
    </location>
</feature>
<feature type="active site" description="Schiff-base intermediate with substrate; via pyruvic acid" evidence="1">
    <location>
        <position position="63"/>
    </location>
</feature>
<feature type="active site" description="Proton acceptor; for processing activity" evidence="1">
    <location>
        <position position="68"/>
    </location>
</feature>
<feature type="active site" description="Proton donor; for catalytic activity" evidence="1">
    <location>
        <position position="83"/>
    </location>
</feature>
<feature type="site" description="Cleavage (non-hydrolytic); by autolysis" evidence="1">
    <location>
        <begin position="62"/>
        <end position="63"/>
    </location>
</feature>
<feature type="modified residue" description="Pyruvic acid (Ser); by autocatalysis" evidence="1">
    <location>
        <position position="63"/>
    </location>
</feature>
<proteinExistence type="inferred from homology"/>
<gene>
    <name evidence="1" type="primary">speH</name>
    <name type="ordered locus">Teth514_1608</name>
</gene>
<protein>
    <recommendedName>
        <fullName evidence="1">S-adenosylmethionine decarboxylase proenzyme</fullName>
        <shortName evidence="1">AdoMetDC</shortName>
        <shortName evidence="1">SAMDC</shortName>
        <ecNumber evidence="1">4.1.1.50</ecNumber>
    </recommendedName>
    <component>
        <recommendedName>
            <fullName evidence="1">S-adenosylmethionine decarboxylase beta chain</fullName>
        </recommendedName>
    </component>
    <component>
        <recommendedName>
            <fullName evidence="1">S-adenosylmethionine decarboxylase alpha chain</fullName>
        </recommendedName>
    </component>
</protein>
<accession>B0K199</accession>
<evidence type="ECO:0000255" key="1">
    <source>
        <dbReference type="HAMAP-Rule" id="MF_00464"/>
    </source>
</evidence>
<dbReference type="EC" id="4.1.1.50" evidence="1"/>
<dbReference type="EMBL" id="CP000923">
    <property type="protein sequence ID" value="ABY92894.1"/>
    <property type="molecule type" value="Genomic_DNA"/>
</dbReference>
<dbReference type="SMR" id="B0K199"/>
<dbReference type="KEGG" id="tex:Teth514_1608"/>
<dbReference type="HOGENOM" id="CLU_125470_2_3_9"/>
<dbReference type="UniPathway" id="UPA00331">
    <property type="reaction ID" value="UER00451"/>
</dbReference>
<dbReference type="Proteomes" id="UP000002155">
    <property type="component" value="Chromosome"/>
</dbReference>
<dbReference type="GO" id="GO:0005829">
    <property type="term" value="C:cytosol"/>
    <property type="evidence" value="ECO:0007669"/>
    <property type="project" value="TreeGrafter"/>
</dbReference>
<dbReference type="GO" id="GO:0004014">
    <property type="term" value="F:adenosylmethionine decarboxylase activity"/>
    <property type="evidence" value="ECO:0007669"/>
    <property type="project" value="UniProtKB-UniRule"/>
</dbReference>
<dbReference type="GO" id="GO:0008295">
    <property type="term" value="P:spermidine biosynthetic process"/>
    <property type="evidence" value="ECO:0007669"/>
    <property type="project" value="UniProtKB-UniRule"/>
</dbReference>
<dbReference type="FunFam" id="3.30.360.110:FF:000001">
    <property type="entry name" value="S-adenosylmethionine decarboxylase proenzyme"/>
    <property type="match status" value="1"/>
</dbReference>
<dbReference type="Gene3D" id="3.30.160.750">
    <property type="match status" value="1"/>
</dbReference>
<dbReference type="Gene3D" id="3.30.360.110">
    <property type="entry name" value="S-adenosylmethionine decarboxylase domain"/>
    <property type="match status" value="1"/>
</dbReference>
<dbReference type="HAMAP" id="MF_00464">
    <property type="entry name" value="AdoMetDC_1"/>
    <property type="match status" value="1"/>
</dbReference>
<dbReference type="InterPro" id="IPR042286">
    <property type="entry name" value="AdoMetDC_C"/>
</dbReference>
<dbReference type="InterPro" id="IPR003826">
    <property type="entry name" value="AdoMetDC_fam_prok"/>
</dbReference>
<dbReference type="InterPro" id="IPR042284">
    <property type="entry name" value="AdoMetDC_N"/>
</dbReference>
<dbReference type="InterPro" id="IPR016067">
    <property type="entry name" value="S-AdoMet_deCO2ase_core"/>
</dbReference>
<dbReference type="InterPro" id="IPR017716">
    <property type="entry name" value="S-AdoMet_deCOase_pro-enz"/>
</dbReference>
<dbReference type="NCBIfam" id="TIGR03330">
    <property type="entry name" value="SAM_DCase_Bsu"/>
    <property type="match status" value="1"/>
</dbReference>
<dbReference type="PANTHER" id="PTHR33866">
    <property type="entry name" value="S-ADENOSYLMETHIONINE DECARBOXYLASE PROENZYME"/>
    <property type="match status" value="1"/>
</dbReference>
<dbReference type="PANTHER" id="PTHR33866:SF2">
    <property type="entry name" value="S-ADENOSYLMETHIONINE DECARBOXYLASE PROENZYME"/>
    <property type="match status" value="1"/>
</dbReference>
<dbReference type="Pfam" id="PF02675">
    <property type="entry name" value="AdoMet_dc"/>
    <property type="match status" value="1"/>
</dbReference>
<dbReference type="SUPFAM" id="SSF56276">
    <property type="entry name" value="S-adenosylmethionine decarboxylase"/>
    <property type="match status" value="1"/>
</dbReference>